<sequence>MIKEINIKIKNFEGPLDLLLHLVSQYEMDIFEVPLVPVIEQYLIYIQTMKELELELAGEYMLMASQLMLIKSRRLLPTVTETFIEDTEQLEYDLLAQIDEYRKYKMLSEDLDELHQERSHYYSKSKTEIITDETVLLQDKTALDLFLAFSKILELQRQQIEDDNTMIAAEKFTIADKIFELNQKFTEQKICKFTDLFSDKTNKDELVTTFMALLELIKNQQVSFSQGELFGEIILERKEISE</sequence>
<dbReference type="EMBL" id="AM406671">
    <property type="protein sequence ID" value="CAL97785.1"/>
    <property type="molecule type" value="Genomic_DNA"/>
</dbReference>
<dbReference type="RefSeq" id="WP_011835091.1">
    <property type="nucleotide sequence ID" value="NC_009004.1"/>
</dbReference>
<dbReference type="SMR" id="A2RKH5"/>
<dbReference type="STRING" id="416870.llmg_1192"/>
<dbReference type="KEGG" id="llm:llmg_1192"/>
<dbReference type="eggNOG" id="COG1354">
    <property type="taxonomic scope" value="Bacteria"/>
</dbReference>
<dbReference type="HOGENOM" id="CLU_038686_3_3_9"/>
<dbReference type="OrthoDB" id="9811016at2"/>
<dbReference type="PhylomeDB" id="A2RKH5"/>
<dbReference type="Proteomes" id="UP000000364">
    <property type="component" value="Chromosome"/>
</dbReference>
<dbReference type="GO" id="GO:0005737">
    <property type="term" value="C:cytoplasm"/>
    <property type="evidence" value="ECO:0007669"/>
    <property type="project" value="UniProtKB-SubCell"/>
</dbReference>
<dbReference type="GO" id="GO:0051301">
    <property type="term" value="P:cell division"/>
    <property type="evidence" value="ECO:0007669"/>
    <property type="project" value="UniProtKB-KW"/>
</dbReference>
<dbReference type="GO" id="GO:0007059">
    <property type="term" value="P:chromosome segregation"/>
    <property type="evidence" value="ECO:0007669"/>
    <property type="project" value="UniProtKB-UniRule"/>
</dbReference>
<dbReference type="GO" id="GO:0006260">
    <property type="term" value="P:DNA replication"/>
    <property type="evidence" value="ECO:0007669"/>
    <property type="project" value="UniProtKB-UniRule"/>
</dbReference>
<dbReference type="Gene3D" id="6.10.250.2410">
    <property type="match status" value="1"/>
</dbReference>
<dbReference type="Gene3D" id="1.10.10.580">
    <property type="entry name" value="Structural maintenance of chromosome 1. Chain E"/>
    <property type="match status" value="1"/>
</dbReference>
<dbReference type="HAMAP" id="MF_01805">
    <property type="entry name" value="ScpA"/>
    <property type="match status" value="1"/>
</dbReference>
<dbReference type="InterPro" id="IPR003768">
    <property type="entry name" value="ScpA"/>
</dbReference>
<dbReference type="InterPro" id="IPR023093">
    <property type="entry name" value="ScpA-like_C"/>
</dbReference>
<dbReference type="NCBIfam" id="NF000993">
    <property type="entry name" value="PRK00104.1-2"/>
    <property type="match status" value="1"/>
</dbReference>
<dbReference type="PANTHER" id="PTHR33969">
    <property type="entry name" value="SEGREGATION AND CONDENSATION PROTEIN A"/>
    <property type="match status" value="1"/>
</dbReference>
<dbReference type="PANTHER" id="PTHR33969:SF2">
    <property type="entry name" value="SEGREGATION AND CONDENSATION PROTEIN A"/>
    <property type="match status" value="1"/>
</dbReference>
<dbReference type="Pfam" id="PF02616">
    <property type="entry name" value="SMC_ScpA"/>
    <property type="match status" value="1"/>
</dbReference>
<protein>
    <recommendedName>
        <fullName evidence="1">Segregation and condensation protein A</fullName>
    </recommendedName>
</protein>
<reference key="1">
    <citation type="journal article" date="2007" name="J. Bacteriol.">
        <title>The complete genome sequence of the lactic acid bacterial paradigm Lactococcus lactis subsp. cremoris MG1363.</title>
        <authorList>
            <person name="Wegmann U."/>
            <person name="O'Connell-Motherway M."/>
            <person name="Zomer A."/>
            <person name="Buist G."/>
            <person name="Shearman C."/>
            <person name="Canchaya C."/>
            <person name="Ventura M."/>
            <person name="Goesmann A."/>
            <person name="Gasson M.J."/>
            <person name="Kuipers O.P."/>
            <person name="van Sinderen D."/>
            <person name="Kok J."/>
        </authorList>
    </citation>
    <scope>NUCLEOTIDE SEQUENCE [LARGE SCALE GENOMIC DNA]</scope>
    <source>
        <strain>MG1363</strain>
    </source>
</reference>
<organism>
    <name type="scientific">Lactococcus lactis subsp. cremoris (strain MG1363)</name>
    <dbReference type="NCBI Taxonomy" id="416870"/>
    <lineage>
        <taxon>Bacteria</taxon>
        <taxon>Bacillati</taxon>
        <taxon>Bacillota</taxon>
        <taxon>Bacilli</taxon>
        <taxon>Lactobacillales</taxon>
        <taxon>Streptococcaceae</taxon>
        <taxon>Lactococcus</taxon>
        <taxon>Lactococcus cremoris subsp. cremoris</taxon>
    </lineage>
</organism>
<keyword id="KW-0131">Cell cycle</keyword>
<keyword id="KW-0132">Cell division</keyword>
<keyword id="KW-0159">Chromosome partition</keyword>
<keyword id="KW-0963">Cytoplasm</keyword>
<comment type="function">
    <text evidence="1">Participates in chromosomal partition during cell division. May act via the formation of a condensin-like complex containing Smc and ScpB that pull DNA away from mid-cell into both cell halves.</text>
</comment>
<comment type="subunit">
    <text evidence="1">Component of a cohesin-like complex composed of ScpA, ScpB and the Smc homodimer, in which ScpA and ScpB bind to the head domain of Smc. The presence of the three proteins is required for the association of the complex with DNA.</text>
</comment>
<comment type="subcellular location">
    <subcellularLocation>
        <location evidence="1">Cytoplasm</location>
    </subcellularLocation>
    <text evidence="1">Associated with two foci at the outer edges of the nucleoid region in young cells, and at four foci within both cell halves in older cells.</text>
</comment>
<comment type="similarity">
    <text evidence="1">Belongs to the ScpA family.</text>
</comment>
<feature type="chain" id="PRO_1000069972" description="Segregation and condensation protein A">
    <location>
        <begin position="1"/>
        <end position="242"/>
    </location>
</feature>
<name>SCPA_LACLM</name>
<gene>
    <name evidence="1" type="primary">scpA</name>
    <name type="ordered locus">llmg_1192</name>
</gene>
<proteinExistence type="inferred from homology"/>
<evidence type="ECO:0000255" key="1">
    <source>
        <dbReference type="HAMAP-Rule" id="MF_01805"/>
    </source>
</evidence>
<accession>A2RKH5</accession>